<comment type="function">
    <text evidence="1">Component of the Mediator complex, a coactivator involved in the regulated transcription of nearly all RNA polymerase II-dependent genes. Mediator functions as a bridge to convey information from gene-specific regulatory proteins to the basal RNA polymerase II transcription machinery. Mediator is recruited to promoters by direct interactions with regulatory proteins and serves as a scaffold for the assembly of a functional preinitiation complex with RNA polymerase II and the general transcription factors (By similarity).</text>
</comment>
<comment type="subunit">
    <text evidence="1">Component of the Mediator complex.</text>
</comment>
<comment type="interaction">
    <interactant intactId="EBI-194372">
        <id>A1ZB42</id>
    </interactant>
    <interactant intactId="EBI-187169">
        <id>Q9VS38</id>
        <label>MED4</label>
    </interactant>
    <organismsDiffer>false</organismsDiffer>
    <experiments>3</experiments>
</comment>
<comment type="subcellular location">
    <subcellularLocation>
        <location evidence="3">Nucleus</location>
    </subcellularLocation>
</comment>
<comment type="similarity">
    <text evidence="3">Belongs to the Mediator complex subunit 9 family.</text>
</comment>
<comment type="caution">
    <text evidence="3">It is uncertain whether Met-1 or Met-2 is the initiator.</text>
</comment>
<comment type="sequence caution" evidence="3">
    <conflict type="erroneous initiation">
        <sequence resource="EMBL-CDS" id="AAM52666"/>
    </conflict>
    <text>Extended N-terminus.</text>
</comment>
<comment type="sequence caution" evidence="3">
    <conflict type="miscellaneous discrepancy">
        <sequence resource="EMBL-CDS" id="AAN71576"/>
    </conflict>
    <text>Intron retention.</text>
</comment>
<keyword id="KW-0010">Activator</keyword>
<keyword id="KW-0175">Coiled coil</keyword>
<keyword id="KW-0539">Nucleus</keyword>
<keyword id="KW-1185">Reference proteome</keyword>
<keyword id="KW-0804">Transcription</keyword>
<keyword id="KW-0805">Transcription regulation</keyword>
<organism>
    <name type="scientific">Drosophila melanogaster</name>
    <name type="common">Fruit fly</name>
    <dbReference type="NCBI Taxonomy" id="7227"/>
    <lineage>
        <taxon>Eukaryota</taxon>
        <taxon>Metazoa</taxon>
        <taxon>Ecdysozoa</taxon>
        <taxon>Arthropoda</taxon>
        <taxon>Hexapoda</taxon>
        <taxon>Insecta</taxon>
        <taxon>Pterygota</taxon>
        <taxon>Neoptera</taxon>
        <taxon>Endopterygota</taxon>
        <taxon>Diptera</taxon>
        <taxon>Brachycera</taxon>
        <taxon>Muscomorpha</taxon>
        <taxon>Ephydroidea</taxon>
        <taxon>Drosophilidae</taxon>
        <taxon>Drosophila</taxon>
        <taxon>Sophophora</taxon>
    </lineage>
</organism>
<evidence type="ECO:0000250" key="1"/>
<evidence type="ECO:0000255" key="2"/>
<evidence type="ECO:0000305" key="3"/>
<gene>
    <name type="primary">MED9</name>
    <name type="ORF">CG5134</name>
</gene>
<dbReference type="EMBL" id="AE013599">
    <property type="protein sequence ID" value="AAM68182.1"/>
    <property type="molecule type" value="Genomic_DNA"/>
</dbReference>
<dbReference type="EMBL" id="AY122154">
    <property type="protein sequence ID" value="AAM52666.1"/>
    <property type="status" value="ALT_INIT"/>
    <property type="molecule type" value="mRNA"/>
</dbReference>
<dbReference type="EMBL" id="BT001821">
    <property type="protein sequence ID" value="AAN71576.1"/>
    <property type="status" value="ALT_SEQ"/>
    <property type="molecule type" value="mRNA"/>
</dbReference>
<dbReference type="RefSeq" id="NP_788400.1">
    <property type="nucleotide sequence ID" value="NM_176220.2"/>
</dbReference>
<dbReference type="SMR" id="A1ZB42"/>
<dbReference type="BioGRID" id="62760">
    <property type="interactions" value="18"/>
</dbReference>
<dbReference type="ComplexPortal" id="CPX-2308">
    <property type="entry name" value="Core mediator complex"/>
</dbReference>
<dbReference type="FunCoup" id="A1ZB42">
    <property type="interactions" value="342"/>
</dbReference>
<dbReference type="IntAct" id="A1ZB42">
    <property type="interactions" value="5"/>
</dbReference>
<dbReference type="STRING" id="7227.FBpp0289888"/>
<dbReference type="PaxDb" id="7227-FBpp0289888"/>
<dbReference type="DNASU" id="37079"/>
<dbReference type="EnsemblMetazoa" id="FBtr0300664">
    <property type="protein sequence ID" value="FBpp0289888"/>
    <property type="gene ID" value="FBgn0260401"/>
</dbReference>
<dbReference type="GeneID" id="37079"/>
<dbReference type="KEGG" id="dme:Dmel_CG42517"/>
<dbReference type="AGR" id="FB:FBgn0260401"/>
<dbReference type="CTD" id="55090"/>
<dbReference type="FlyBase" id="FBgn0260401">
    <property type="gene designation" value="MED9"/>
</dbReference>
<dbReference type="VEuPathDB" id="VectorBase:FBgn0260401"/>
<dbReference type="eggNOG" id="ENOG502S47C">
    <property type="taxonomic scope" value="Eukaryota"/>
</dbReference>
<dbReference type="GeneTree" id="ENSGT00390000017379"/>
<dbReference type="HOGENOM" id="CLU_1817785_0_0_1"/>
<dbReference type="InParanoid" id="A1ZB42"/>
<dbReference type="OMA" id="ESQDCNH"/>
<dbReference type="OrthoDB" id="5950777at2759"/>
<dbReference type="PhylomeDB" id="A1ZB42"/>
<dbReference type="BioGRID-ORCS" id="37079">
    <property type="hits" value="1 hit in 1 CRISPR screen"/>
</dbReference>
<dbReference type="GenomeRNAi" id="37079"/>
<dbReference type="PRO" id="PR:A1ZB42"/>
<dbReference type="Proteomes" id="UP000000803">
    <property type="component" value="Chromosome 2R"/>
</dbReference>
<dbReference type="Bgee" id="FBgn0260401">
    <property type="expression patterns" value="Expressed in saliva-secreting gland and 11 other cell types or tissues"/>
</dbReference>
<dbReference type="GO" id="GO:0016592">
    <property type="term" value="C:mediator complex"/>
    <property type="evidence" value="ECO:0000250"/>
    <property type="project" value="UniProtKB"/>
</dbReference>
<dbReference type="GO" id="GO:0003712">
    <property type="term" value="F:transcription coregulator activity"/>
    <property type="evidence" value="ECO:0000250"/>
    <property type="project" value="UniProtKB"/>
</dbReference>
<dbReference type="GO" id="GO:0006357">
    <property type="term" value="P:regulation of transcription by RNA polymerase II"/>
    <property type="evidence" value="ECO:0000250"/>
    <property type="project" value="UniProtKB"/>
</dbReference>
<dbReference type="InterPro" id="IPR037212">
    <property type="entry name" value="Med7/Med21-like"/>
</dbReference>
<dbReference type="InterPro" id="IPR011425">
    <property type="entry name" value="Med9"/>
</dbReference>
<dbReference type="InterPro" id="IPR039242">
    <property type="entry name" value="MED9_metazoa"/>
</dbReference>
<dbReference type="PANTHER" id="PTHR20844:SF0">
    <property type="entry name" value="MEDIATOR OF RNA POLYMERASE II TRANSCRIPTION SUBUNIT 9"/>
    <property type="match status" value="1"/>
</dbReference>
<dbReference type="PANTHER" id="PTHR20844">
    <property type="entry name" value="MEDIATOR OF RNA POLYMERASE II TRANSCRIPTION, SUBUNIT 9"/>
    <property type="match status" value="1"/>
</dbReference>
<dbReference type="Pfam" id="PF07544">
    <property type="entry name" value="Med9"/>
    <property type="match status" value="1"/>
</dbReference>
<dbReference type="SUPFAM" id="SSF140718">
    <property type="entry name" value="Mediator hinge subcomplex-like"/>
    <property type="match status" value="1"/>
</dbReference>
<proteinExistence type="evidence at protein level"/>
<protein>
    <recommendedName>
        <fullName>Mediator of RNA polymerase II transcription subunit 9</fullName>
    </recommendedName>
    <alternativeName>
        <fullName>Mediator complex subunit 9</fullName>
    </alternativeName>
</protein>
<feature type="chain" id="PRO_0000304150" description="Mediator of RNA polymerase II transcription subunit 9">
    <location>
        <begin position="1"/>
        <end position="144"/>
    </location>
</feature>
<feature type="coiled-coil region" evidence="2">
    <location>
        <begin position="85"/>
        <end position="143"/>
    </location>
</feature>
<sequence>MMDLSPNNQIEDRKPILTADGLVQTSNSPFEPTISQETQTSNGIGGQCHLTVDQLDIEILPIIYDIVRCVEKDPLENAVKLRESQDCNHKIFELQKRFESAREQIRQLPGIDFNKEEQQQRLELLRNQLKLKQQLIRKYKDTEF</sequence>
<name>MED9_DROME</name>
<accession>A1ZB42</accession>
<accession>A1ZB41</accession>
<accession>Q8IGE5</accession>
<accession>Q8MR32</accession>
<reference key="1">
    <citation type="journal article" date="2000" name="Science">
        <title>The genome sequence of Drosophila melanogaster.</title>
        <authorList>
            <person name="Adams M.D."/>
            <person name="Celniker S.E."/>
            <person name="Holt R.A."/>
            <person name="Evans C.A."/>
            <person name="Gocayne J.D."/>
            <person name="Amanatides P.G."/>
            <person name="Scherer S.E."/>
            <person name="Li P.W."/>
            <person name="Hoskins R.A."/>
            <person name="Galle R.F."/>
            <person name="George R.A."/>
            <person name="Lewis S.E."/>
            <person name="Richards S."/>
            <person name="Ashburner M."/>
            <person name="Henderson S.N."/>
            <person name="Sutton G.G."/>
            <person name="Wortman J.R."/>
            <person name="Yandell M.D."/>
            <person name="Zhang Q."/>
            <person name="Chen L.X."/>
            <person name="Brandon R.C."/>
            <person name="Rogers Y.-H.C."/>
            <person name="Blazej R.G."/>
            <person name="Champe M."/>
            <person name="Pfeiffer B.D."/>
            <person name="Wan K.H."/>
            <person name="Doyle C."/>
            <person name="Baxter E.G."/>
            <person name="Helt G."/>
            <person name="Nelson C.R."/>
            <person name="Miklos G.L.G."/>
            <person name="Abril J.F."/>
            <person name="Agbayani A."/>
            <person name="An H.-J."/>
            <person name="Andrews-Pfannkoch C."/>
            <person name="Baldwin D."/>
            <person name="Ballew R.M."/>
            <person name="Basu A."/>
            <person name="Baxendale J."/>
            <person name="Bayraktaroglu L."/>
            <person name="Beasley E.M."/>
            <person name="Beeson K.Y."/>
            <person name="Benos P.V."/>
            <person name="Berman B.P."/>
            <person name="Bhandari D."/>
            <person name="Bolshakov S."/>
            <person name="Borkova D."/>
            <person name="Botchan M.R."/>
            <person name="Bouck J."/>
            <person name="Brokstein P."/>
            <person name="Brottier P."/>
            <person name="Burtis K.C."/>
            <person name="Busam D.A."/>
            <person name="Butler H."/>
            <person name="Cadieu E."/>
            <person name="Center A."/>
            <person name="Chandra I."/>
            <person name="Cherry J.M."/>
            <person name="Cawley S."/>
            <person name="Dahlke C."/>
            <person name="Davenport L.B."/>
            <person name="Davies P."/>
            <person name="de Pablos B."/>
            <person name="Delcher A."/>
            <person name="Deng Z."/>
            <person name="Mays A.D."/>
            <person name="Dew I."/>
            <person name="Dietz S.M."/>
            <person name="Dodson K."/>
            <person name="Doup L.E."/>
            <person name="Downes M."/>
            <person name="Dugan-Rocha S."/>
            <person name="Dunkov B.C."/>
            <person name="Dunn P."/>
            <person name="Durbin K.J."/>
            <person name="Evangelista C.C."/>
            <person name="Ferraz C."/>
            <person name="Ferriera S."/>
            <person name="Fleischmann W."/>
            <person name="Fosler C."/>
            <person name="Gabrielian A.E."/>
            <person name="Garg N.S."/>
            <person name="Gelbart W.M."/>
            <person name="Glasser K."/>
            <person name="Glodek A."/>
            <person name="Gong F."/>
            <person name="Gorrell J.H."/>
            <person name="Gu Z."/>
            <person name="Guan P."/>
            <person name="Harris M."/>
            <person name="Harris N.L."/>
            <person name="Harvey D.A."/>
            <person name="Heiman T.J."/>
            <person name="Hernandez J.R."/>
            <person name="Houck J."/>
            <person name="Hostin D."/>
            <person name="Houston K.A."/>
            <person name="Howland T.J."/>
            <person name="Wei M.-H."/>
            <person name="Ibegwam C."/>
            <person name="Jalali M."/>
            <person name="Kalush F."/>
            <person name="Karpen G.H."/>
            <person name="Ke Z."/>
            <person name="Kennison J.A."/>
            <person name="Ketchum K.A."/>
            <person name="Kimmel B.E."/>
            <person name="Kodira C.D."/>
            <person name="Kraft C.L."/>
            <person name="Kravitz S."/>
            <person name="Kulp D."/>
            <person name="Lai Z."/>
            <person name="Lasko P."/>
            <person name="Lei Y."/>
            <person name="Levitsky A.A."/>
            <person name="Li J.H."/>
            <person name="Li Z."/>
            <person name="Liang Y."/>
            <person name="Lin X."/>
            <person name="Liu X."/>
            <person name="Mattei B."/>
            <person name="McIntosh T.C."/>
            <person name="McLeod M.P."/>
            <person name="McPherson D."/>
            <person name="Merkulov G."/>
            <person name="Milshina N.V."/>
            <person name="Mobarry C."/>
            <person name="Morris J."/>
            <person name="Moshrefi A."/>
            <person name="Mount S.M."/>
            <person name="Moy M."/>
            <person name="Murphy B."/>
            <person name="Murphy L."/>
            <person name="Muzny D.M."/>
            <person name="Nelson D.L."/>
            <person name="Nelson D.R."/>
            <person name="Nelson K.A."/>
            <person name="Nixon K."/>
            <person name="Nusskern D.R."/>
            <person name="Pacleb J.M."/>
            <person name="Palazzolo M."/>
            <person name="Pittman G.S."/>
            <person name="Pan S."/>
            <person name="Pollard J."/>
            <person name="Puri V."/>
            <person name="Reese M.G."/>
            <person name="Reinert K."/>
            <person name="Remington K."/>
            <person name="Saunders R.D.C."/>
            <person name="Scheeler F."/>
            <person name="Shen H."/>
            <person name="Shue B.C."/>
            <person name="Siden-Kiamos I."/>
            <person name="Simpson M."/>
            <person name="Skupski M.P."/>
            <person name="Smith T.J."/>
            <person name="Spier E."/>
            <person name="Spradling A.C."/>
            <person name="Stapleton M."/>
            <person name="Strong R."/>
            <person name="Sun E."/>
            <person name="Svirskas R."/>
            <person name="Tector C."/>
            <person name="Turner R."/>
            <person name="Venter E."/>
            <person name="Wang A.H."/>
            <person name="Wang X."/>
            <person name="Wang Z.-Y."/>
            <person name="Wassarman D.A."/>
            <person name="Weinstock G.M."/>
            <person name="Weissenbach J."/>
            <person name="Williams S.M."/>
            <person name="Woodage T."/>
            <person name="Worley K.C."/>
            <person name="Wu D."/>
            <person name="Yang S."/>
            <person name="Yao Q.A."/>
            <person name="Ye J."/>
            <person name="Yeh R.-F."/>
            <person name="Zaveri J.S."/>
            <person name="Zhan M."/>
            <person name="Zhang G."/>
            <person name="Zhao Q."/>
            <person name="Zheng L."/>
            <person name="Zheng X.H."/>
            <person name="Zhong F.N."/>
            <person name="Zhong W."/>
            <person name="Zhou X."/>
            <person name="Zhu S.C."/>
            <person name="Zhu X."/>
            <person name="Smith H.O."/>
            <person name="Gibbs R.A."/>
            <person name="Myers E.W."/>
            <person name="Rubin G.M."/>
            <person name="Venter J.C."/>
        </authorList>
    </citation>
    <scope>NUCLEOTIDE SEQUENCE [LARGE SCALE GENOMIC DNA]</scope>
    <source>
        <strain>Berkeley</strain>
    </source>
</reference>
<reference key="2">
    <citation type="journal article" date="2002" name="Genome Biol.">
        <title>Annotation of the Drosophila melanogaster euchromatic genome: a systematic review.</title>
        <authorList>
            <person name="Misra S."/>
            <person name="Crosby M.A."/>
            <person name="Mungall C.J."/>
            <person name="Matthews B.B."/>
            <person name="Campbell K.S."/>
            <person name="Hradecky P."/>
            <person name="Huang Y."/>
            <person name="Kaminker J.S."/>
            <person name="Millburn G.H."/>
            <person name="Prochnik S.E."/>
            <person name="Smith C.D."/>
            <person name="Tupy J.L."/>
            <person name="Whitfield E.J."/>
            <person name="Bayraktaroglu L."/>
            <person name="Berman B.P."/>
            <person name="Bettencourt B.R."/>
            <person name="Celniker S.E."/>
            <person name="de Grey A.D.N.J."/>
            <person name="Drysdale R.A."/>
            <person name="Harris N.L."/>
            <person name="Richter J."/>
            <person name="Russo S."/>
            <person name="Schroeder A.J."/>
            <person name="Shu S.Q."/>
            <person name="Stapleton M."/>
            <person name="Yamada C."/>
            <person name="Ashburner M."/>
            <person name="Gelbart W.M."/>
            <person name="Rubin G.M."/>
            <person name="Lewis S.E."/>
        </authorList>
    </citation>
    <scope>GENOME REANNOTATION</scope>
    <source>
        <strain>Berkeley</strain>
    </source>
</reference>
<reference key="3">
    <citation type="journal article" date="2002" name="Genome Biol.">
        <title>A Drosophila full-length cDNA resource.</title>
        <authorList>
            <person name="Stapleton M."/>
            <person name="Carlson J.W."/>
            <person name="Brokstein P."/>
            <person name="Yu C."/>
            <person name="Champe M."/>
            <person name="George R.A."/>
            <person name="Guarin H."/>
            <person name="Kronmiller B."/>
            <person name="Pacleb J.M."/>
            <person name="Park S."/>
            <person name="Wan K.H."/>
            <person name="Rubin G.M."/>
            <person name="Celniker S.E."/>
        </authorList>
    </citation>
    <scope>NUCLEOTIDE SEQUENCE [LARGE SCALE MRNA]</scope>
    <source>
        <strain>Berkeley</strain>
        <tissue>Embryo</tissue>
        <tissue>Head</tissue>
    </source>
</reference>